<feature type="chain" id="PRO_0000081031" description="Sensory transduction protein BceR">
    <location>
        <begin position="1"/>
        <end position="231"/>
    </location>
</feature>
<feature type="domain" description="Response regulatory" evidence="1">
    <location>
        <begin position="3"/>
        <end position="116"/>
    </location>
</feature>
<feature type="DNA-binding region" description="OmpR/PhoB-type" evidence="2">
    <location>
        <begin position="127"/>
        <end position="225"/>
    </location>
</feature>
<feature type="modified residue" description="4-aspartylphosphate" evidence="1">
    <location>
        <position position="52"/>
    </location>
</feature>
<organism>
    <name type="scientific">Bacillus subtilis (strain 168)</name>
    <dbReference type="NCBI Taxonomy" id="224308"/>
    <lineage>
        <taxon>Bacteria</taxon>
        <taxon>Bacillati</taxon>
        <taxon>Bacillota</taxon>
        <taxon>Bacilli</taxon>
        <taxon>Bacillales</taxon>
        <taxon>Bacillaceae</taxon>
        <taxon>Bacillus</taxon>
    </lineage>
</organism>
<evidence type="ECO:0000255" key="1">
    <source>
        <dbReference type="PROSITE-ProRule" id="PRU00169"/>
    </source>
</evidence>
<evidence type="ECO:0000255" key="2">
    <source>
        <dbReference type="PROSITE-ProRule" id="PRU01091"/>
    </source>
</evidence>
<evidence type="ECO:0000269" key="3">
    <source>
    </source>
</evidence>
<evidence type="ECO:0000269" key="4">
    <source>
    </source>
</evidence>
<evidence type="ECO:0000269" key="5">
    <source>
    </source>
</evidence>
<evidence type="ECO:0000305" key="6"/>
<protein>
    <recommendedName>
        <fullName>Sensory transduction protein BceR</fullName>
    </recommendedName>
</protein>
<name>BCER_BACSU</name>
<gene>
    <name type="primary">bceR</name>
    <name type="synonym">barA</name>
    <name type="synonym">ytsA</name>
    <name type="ordered locus">BSU30400</name>
</gene>
<proteinExistence type="inferred from homology"/>
<sequence length="231" mass="26867">MFKLLLIEDDESLFHEIKDRLTGWSYDVYGIQDFSQVLQEFAAVNPDCVIIDVQLPKFDGFHWCRLIRSRSNVPILFLSSRDHPADMVMSMQLGADDFIQKPFHFDVLIAKIQAMFRRVHHYNTEPSTIKTWCGAAVDAEQNLVSNDKGSVELTKNEMFILKQLIEQKNKIVSREELIRSLWNDERFVSDNTLTVNVNRLRKKLDALQLGAYIETKVGQGYIAKEEDKFYD</sequence>
<keyword id="KW-0963">Cytoplasm</keyword>
<keyword id="KW-0238">DNA-binding</keyword>
<keyword id="KW-0597">Phosphoprotein</keyword>
<keyword id="KW-1185">Reference proteome</keyword>
<keyword id="KW-0804">Transcription</keyword>
<keyword id="KW-0805">Transcription regulation</keyword>
<keyword id="KW-0902">Two-component regulatory system</keyword>
<reference key="1">
    <citation type="journal article" date="1997" name="Microbiology">
        <title>Sequencing and functional annotation of the Bacillus subtilis genes in the 200 kb rrnB-dnaB region.</title>
        <authorList>
            <person name="Lapidus A."/>
            <person name="Galleron N."/>
            <person name="Sorokin A."/>
            <person name="Ehrlich S.D."/>
        </authorList>
    </citation>
    <scope>NUCLEOTIDE SEQUENCE [GENOMIC DNA]</scope>
    <source>
        <strain>168</strain>
    </source>
</reference>
<reference key="2">
    <citation type="journal article" date="1997" name="Nature">
        <title>The complete genome sequence of the Gram-positive bacterium Bacillus subtilis.</title>
        <authorList>
            <person name="Kunst F."/>
            <person name="Ogasawara N."/>
            <person name="Moszer I."/>
            <person name="Albertini A.M."/>
            <person name="Alloni G."/>
            <person name="Azevedo V."/>
            <person name="Bertero M.G."/>
            <person name="Bessieres P."/>
            <person name="Bolotin A."/>
            <person name="Borchert S."/>
            <person name="Borriss R."/>
            <person name="Boursier L."/>
            <person name="Brans A."/>
            <person name="Braun M."/>
            <person name="Brignell S.C."/>
            <person name="Bron S."/>
            <person name="Brouillet S."/>
            <person name="Bruschi C.V."/>
            <person name="Caldwell B."/>
            <person name="Capuano V."/>
            <person name="Carter N.M."/>
            <person name="Choi S.-K."/>
            <person name="Codani J.-J."/>
            <person name="Connerton I.F."/>
            <person name="Cummings N.J."/>
            <person name="Daniel R.A."/>
            <person name="Denizot F."/>
            <person name="Devine K.M."/>
            <person name="Duesterhoeft A."/>
            <person name="Ehrlich S.D."/>
            <person name="Emmerson P.T."/>
            <person name="Entian K.-D."/>
            <person name="Errington J."/>
            <person name="Fabret C."/>
            <person name="Ferrari E."/>
            <person name="Foulger D."/>
            <person name="Fritz C."/>
            <person name="Fujita M."/>
            <person name="Fujita Y."/>
            <person name="Fuma S."/>
            <person name="Galizzi A."/>
            <person name="Galleron N."/>
            <person name="Ghim S.-Y."/>
            <person name="Glaser P."/>
            <person name="Goffeau A."/>
            <person name="Golightly E.J."/>
            <person name="Grandi G."/>
            <person name="Guiseppi G."/>
            <person name="Guy B.J."/>
            <person name="Haga K."/>
            <person name="Haiech J."/>
            <person name="Harwood C.R."/>
            <person name="Henaut A."/>
            <person name="Hilbert H."/>
            <person name="Holsappel S."/>
            <person name="Hosono S."/>
            <person name="Hullo M.-F."/>
            <person name="Itaya M."/>
            <person name="Jones L.-M."/>
            <person name="Joris B."/>
            <person name="Karamata D."/>
            <person name="Kasahara Y."/>
            <person name="Klaerr-Blanchard M."/>
            <person name="Klein C."/>
            <person name="Kobayashi Y."/>
            <person name="Koetter P."/>
            <person name="Koningstein G."/>
            <person name="Krogh S."/>
            <person name="Kumano M."/>
            <person name="Kurita K."/>
            <person name="Lapidus A."/>
            <person name="Lardinois S."/>
            <person name="Lauber J."/>
            <person name="Lazarevic V."/>
            <person name="Lee S.-M."/>
            <person name="Levine A."/>
            <person name="Liu H."/>
            <person name="Masuda S."/>
            <person name="Mauel C."/>
            <person name="Medigue C."/>
            <person name="Medina N."/>
            <person name="Mellado R.P."/>
            <person name="Mizuno M."/>
            <person name="Moestl D."/>
            <person name="Nakai S."/>
            <person name="Noback M."/>
            <person name="Noone D."/>
            <person name="O'Reilly M."/>
            <person name="Ogawa K."/>
            <person name="Ogiwara A."/>
            <person name="Oudega B."/>
            <person name="Park S.-H."/>
            <person name="Parro V."/>
            <person name="Pohl T.M."/>
            <person name="Portetelle D."/>
            <person name="Porwollik S."/>
            <person name="Prescott A.M."/>
            <person name="Presecan E."/>
            <person name="Pujic P."/>
            <person name="Purnelle B."/>
            <person name="Rapoport G."/>
            <person name="Rey M."/>
            <person name="Reynolds S."/>
            <person name="Rieger M."/>
            <person name="Rivolta C."/>
            <person name="Rocha E."/>
            <person name="Roche B."/>
            <person name="Rose M."/>
            <person name="Sadaie Y."/>
            <person name="Sato T."/>
            <person name="Scanlan E."/>
            <person name="Schleich S."/>
            <person name="Schroeter R."/>
            <person name="Scoffone F."/>
            <person name="Sekiguchi J."/>
            <person name="Sekowska A."/>
            <person name="Seror S.J."/>
            <person name="Serror P."/>
            <person name="Shin B.-S."/>
            <person name="Soldo B."/>
            <person name="Sorokin A."/>
            <person name="Tacconi E."/>
            <person name="Takagi T."/>
            <person name="Takahashi H."/>
            <person name="Takemaru K."/>
            <person name="Takeuchi M."/>
            <person name="Tamakoshi A."/>
            <person name="Tanaka T."/>
            <person name="Terpstra P."/>
            <person name="Tognoni A."/>
            <person name="Tosato V."/>
            <person name="Uchiyama S."/>
            <person name="Vandenbol M."/>
            <person name="Vannier F."/>
            <person name="Vassarotti A."/>
            <person name="Viari A."/>
            <person name="Wambutt R."/>
            <person name="Wedler E."/>
            <person name="Wedler H."/>
            <person name="Weitzenegger T."/>
            <person name="Winters P."/>
            <person name="Wipat A."/>
            <person name="Yamamoto H."/>
            <person name="Yamane K."/>
            <person name="Yasumoto K."/>
            <person name="Yata K."/>
            <person name="Yoshida K."/>
            <person name="Yoshikawa H.-F."/>
            <person name="Zumstein E."/>
            <person name="Yoshikawa H."/>
            <person name="Danchin A."/>
        </authorList>
    </citation>
    <scope>NUCLEOTIDE SEQUENCE [LARGE SCALE GENOMIC DNA]</scope>
    <source>
        <strain>168</strain>
    </source>
</reference>
<reference key="3">
    <citation type="journal article" date="2001" name="J. Bacteriol.">
        <title>Comprehensive DNA microarray analysis of Bacillus subtilis two-component regulatory systems.</title>
        <authorList>
            <person name="Kobayashi K."/>
            <person name="Ogura M."/>
            <person name="Yamaguchi H."/>
            <person name="Yoshida K."/>
            <person name="Ogasawara N."/>
            <person name="Tanaka T."/>
            <person name="Fujita Y."/>
        </authorList>
    </citation>
    <scope>FUNCTION</scope>
</reference>
<reference key="4">
    <citation type="journal article" date="2003" name="FEMS Microbiol. Lett.">
        <title>YtsCD and YwoA, two independent systems that confer bacitracin resistance to Bacillus subtilis.</title>
        <authorList>
            <person name="Bernard R."/>
            <person name="Joseph P."/>
            <person name="Guiseppi A."/>
            <person name="Chippaux M."/>
            <person name="Denizot F."/>
        </authorList>
    </citation>
    <scope>FUNCTION</scope>
    <source>
        <strain>168</strain>
    </source>
</reference>
<reference key="5">
    <citation type="journal article" date="2003" name="Mol. Microbiol.">
        <title>The BceRS two-component regulatory system induces expression of the bacitracin transporter, BceAB, in Bacillus subtilis.</title>
        <authorList>
            <person name="Ohki R."/>
            <person name="Giyanto X."/>
            <person name="Tateno K."/>
            <person name="Masuyama W."/>
            <person name="Moriya S."/>
            <person name="Kobayashi K."/>
            <person name="Ogasawara N."/>
        </authorList>
    </citation>
    <scope>FUNCTION</scope>
    <source>
        <strain>168</strain>
    </source>
</reference>
<dbReference type="EMBL" id="AF008220">
    <property type="protein sequence ID" value="AAC00253.1"/>
    <property type="molecule type" value="Genomic_DNA"/>
</dbReference>
<dbReference type="EMBL" id="AL009126">
    <property type="protein sequence ID" value="CAB15018.1"/>
    <property type="molecule type" value="Genomic_DNA"/>
</dbReference>
<dbReference type="PIR" id="G70000">
    <property type="entry name" value="G70000"/>
</dbReference>
<dbReference type="RefSeq" id="NP_390918.1">
    <property type="nucleotide sequence ID" value="NC_000964.3"/>
</dbReference>
<dbReference type="RefSeq" id="WP_004399109.1">
    <property type="nucleotide sequence ID" value="NZ_OZ025638.1"/>
</dbReference>
<dbReference type="SMR" id="O34951"/>
<dbReference type="FunCoup" id="O34951">
    <property type="interactions" value="148"/>
</dbReference>
<dbReference type="STRING" id="224308.BSU30400"/>
<dbReference type="PaxDb" id="224308-BSU30400"/>
<dbReference type="EnsemblBacteria" id="CAB15018">
    <property type="protein sequence ID" value="CAB15018"/>
    <property type="gene ID" value="BSU_30400"/>
</dbReference>
<dbReference type="GeneID" id="936307"/>
<dbReference type="KEGG" id="bsu:BSU30400"/>
<dbReference type="PATRIC" id="fig|224308.179.peg.3297"/>
<dbReference type="eggNOG" id="COG0745">
    <property type="taxonomic scope" value="Bacteria"/>
</dbReference>
<dbReference type="InParanoid" id="O34951"/>
<dbReference type="OrthoDB" id="9790442at2"/>
<dbReference type="PhylomeDB" id="O34951"/>
<dbReference type="BioCyc" id="BSUB:BSU30400-MONOMER"/>
<dbReference type="Proteomes" id="UP000001570">
    <property type="component" value="Chromosome"/>
</dbReference>
<dbReference type="GO" id="GO:0005829">
    <property type="term" value="C:cytosol"/>
    <property type="evidence" value="ECO:0000318"/>
    <property type="project" value="GO_Central"/>
</dbReference>
<dbReference type="GO" id="GO:0032993">
    <property type="term" value="C:protein-DNA complex"/>
    <property type="evidence" value="ECO:0000318"/>
    <property type="project" value="GO_Central"/>
</dbReference>
<dbReference type="GO" id="GO:0000156">
    <property type="term" value="F:phosphorelay response regulator activity"/>
    <property type="evidence" value="ECO:0000318"/>
    <property type="project" value="GO_Central"/>
</dbReference>
<dbReference type="GO" id="GO:0000976">
    <property type="term" value="F:transcription cis-regulatory region binding"/>
    <property type="evidence" value="ECO:0000318"/>
    <property type="project" value="GO_Central"/>
</dbReference>
<dbReference type="GO" id="GO:0006355">
    <property type="term" value="P:regulation of DNA-templated transcription"/>
    <property type="evidence" value="ECO:0000318"/>
    <property type="project" value="GO_Central"/>
</dbReference>
<dbReference type="CDD" id="cd18159">
    <property type="entry name" value="REC_OmpR_NsrR-like"/>
    <property type="match status" value="1"/>
</dbReference>
<dbReference type="CDD" id="cd00383">
    <property type="entry name" value="trans_reg_C"/>
    <property type="match status" value="1"/>
</dbReference>
<dbReference type="Gene3D" id="3.40.50.2300">
    <property type="match status" value="1"/>
</dbReference>
<dbReference type="Gene3D" id="1.10.10.10">
    <property type="entry name" value="Winged helix-like DNA-binding domain superfamily/Winged helix DNA-binding domain"/>
    <property type="match status" value="1"/>
</dbReference>
<dbReference type="InterPro" id="IPR011006">
    <property type="entry name" value="CheY-like_superfamily"/>
</dbReference>
<dbReference type="InterPro" id="IPR001867">
    <property type="entry name" value="OmpR/PhoB-type_DNA-bd"/>
</dbReference>
<dbReference type="InterPro" id="IPR016032">
    <property type="entry name" value="Sig_transdc_resp-reg_C-effctor"/>
</dbReference>
<dbReference type="InterPro" id="IPR001789">
    <property type="entry name" value="Sig_transdc_resp-reg_receiver"/>
</dbReference>
<dbReference type="InterPro" id="IPR039420">
    <property type="entry name" value="WalR-like"/>
</dbReference>
<dbReference type="InterPro" id="IPR036388">
    <property type="entry name" value="WH-like_DNA-bd_sf"/>
</dbReference>
<dbReference type="PANTHER" id="PTHR48111">
    <property type="entry name" value="REGULATOR OF RPOS"/>
    <property type="match status" value="1"/>
</dbReference>
<dbReference type="PANTHER" id="PTHR48111:SF27">
    <property type="entry name" value="SENSORY TRANSDUCTION PROTEIN BCER"/>
    <property type="match status" value="1"/>
</dbReference>
<dbReference type="Pfam" id="PF00072">
    <property type="entry name" value="Response_reg"/>
    <property type="match status" value="1"/>
</dbReference>
<dbReference type="Pfam" id="PF00486">
    <property type="entry name" value="Trans_reg_C"/>
    <property type="match status" value="1"/>
</dbReference>
<dbReference type="SMART" id="SM00448">
    <property type="entry name" value="REC"/>
    <property type="match status" value="1"/>
</dbReference>
<dbReference type="SMART" id="SM00862">
    <property type="entry name" value="Trans_reg_C"/>
    <property type="match status" value="1"/>
</dbReference>
<dbReference type="SUPFAM" id="SSF46894">
    <property type="entry name" value="C-terminal effector domain of the bipartite response regulators"/>
    <property type="match status" value="1"/>
</dbReference>
<dbReference type="SUPFAM" id="SSF52172">
    <property type="entry name" value="CheY-like"/>
    <property type="match status" value="1"/>
</dbReference>
<dbReference type="PROSITE" id="PS51755">
    <property type="entry name" value="OMPR_PHOB"/>
    <property type="match status" value="1"/>
</dbReference>
<dbReference type="PROSITE" id="PS50110">
    <property type="entry name" value="RESPONSE_REGULATORY"/>
    <property type="match status" value="1"/>
</dbReference>
<accession>O34951</accession>
<comment type="function">
    <text evidence="3 4 5">Member of the two-component regulatory system BceS/BceR involved in the regulation of bacitracin resistance. When activated by BceS, binds to the upstream region of the bceAB promoter and up-regulates the expression of these two genes.</text>
</comment>
<comment type="subcellular location">
    <subcellularLocation>
        <location evidence="6">Cytoplasm</location>
    </subcellularLocation>
</comment>
<comment type="PTM">
    <text evidence="6">Phosphorylated by BceS.</text>
</comment>